<proteinExistence type="inferred from homology"/>
<accession>Q64UB9</accession>
<protein>
    <recommendedName>
        <fullName evidence="1">3-methyl-2-oxobutanoate hydroxymethyltransferase</fullName>
        <ecNumber evidence="1">2.1.2.11</ecNumber>
    </recommendedName>
    <alternativeName>
        <fullName evidence="1">Ketopantoate hydroxymethyltransferase</fullName>
        <shortName evidence="1">KPHMT</shortName>
    </alternativeName>
</protein>
<dbReference type="EC" id="2.1.2.11" evidence="1"/>
<dbReference type="EMBL" id="AP006841">
    <property type="protein sequence ID" value="BAD48910.1"/>
    <property type="molecule type" value="Genomic_DNA"/>
</dbReference>
<dbReference type="RefSeq" id="WP_005787461.1">
    <property type="nucleotide sequence ID" value="NZ_UYXF01000031.1"/>
</dbReference>
<dbReference type="RefSeq" id="YP_099444.1">
    <property type="nucleotide sequence ID" value="NC_006347.1"/>
</dbReference>
<dbReference type="SMR" id="Q64UB9"/>
<dbReference type="STRING" id="295405.BF2163"/>
<dbReference type="GeneID" id="60367359"/>
<dbReference type="KEGG" id="bfr:BF2163"/>
<dbReference type="PATRIC" id="fig|295405.11.peg.2101"/>
<dbReference type="HOGENOM" id="CLU_036645_1_0_10"/>
<dbReference type="OrthoDB" id="9781789at2"/>
<dbReference type="UniPathway" id="UPA00028">
    <property type="reaction ID" value="UER00003"/>
</dbReference>
<dbReference type="Proteomes" id="UP000002197">
    <property type="component" value="Chromosome"/>
</dbReference>
<dbReference type="GO" id="GO:0005737">
    <property type="term" value="C:cytoplasm"/>
    <property type="evidence" value="ECO:0007669"/>
    <property type="project" value="UniProtKB-SubCell"/>
</dbReference>
<dbReference type="GO" id="GO:0003864">
    <property type="term" value="F:3-methyl-2-oxobutanoate hydroxymethyltransferase activity"/>
    <property type="evidence" value="ECO:0007669"/>
    <property type="project" value="UniProtKB-UniRule"/>
</dbReference>
<dbReference type="GO" id="GO:0000287">
    <property type="term" value="F:magnesium ion binding"/>
    <property type="evidence" value="ECO:0007669"/>
    <property type="project" value="TreeGrafter"/>
</dbReference>
<dbReference type="GO" id="GO:0015940">
    <property type="term" value="P:pantothenate biosynthetic process"/>
    <property type="evidence" value="ECO:0007669"/>
    <property type="project" value="UniProtKB-UniRule"/>
</dbReference>
<dbReference type="CDD" id="cd06557">
    <property type="entry name" value="KPHMT-like"/>
    <property type="match status" value="1"/>
</dbReference>
<dbReference type="FunFam" id="3.20.20.60:FF:000017">
    <property type="entry name" value="3-methyl-2-oxobutanoate hydroxymethyltransferase"/>
    <property type="match status" value="1"/>
</dbReference>
<dbReference type="Gene3D" id="3.20.20.60">
    <property type="entry name" value="Phosphoenolpyruvate-binding domains"/>
    <property type="match status" value="1"/>
</dbReference>
<dbReference type="HAMAP" id="MF_00156">
    <property type="entry name" value="PanB"/>
    <property type="match status" value="1"/>
</dbReference>
<dbReference type="InterPro" id="IPR003700">
    <property type="entry name" value="Pantoate_hydroxy_MeTrfase"/>
</dbReference>
<dbReference type="InterPro" id="IPR015813">
    <property type="entry name" value="Pyrv/PenolPyrv_kinase-like_dom"/>
</dbReference>
<dbReference type="InterPro" id="IPR040442">
    <property type="entry name" value="Pyrv_kinase-like_dom_sf"/>
</dbReference>
<dbReference type="NCBIfam" id="TIGR00222">
    <property type="entry name" value="panB"/>
    <property type="match status" value="1"/>
</dbReference>
<dbReference type="NCBIfam" id="NF001452">
    <property type="entry name" value="PRK00311.1"/>
    <property type="match status" value="1"/>
</dbReference>
<dbReference type="PANTHER" id="PTHR20881">
    <property type="entry name" value="3-METHYL-2-OXOBUTANOATE HYDROXYMETHYLTRANSFERASE"/>
    <property type="match status" value="1"/>
</dbReference>
<dbReference type="PANTHER" id="PTHR20881:SF0">
    <property type="entry name" value="3-METHYL-2-OXOBUTANOATE HYDROXYMETHYLTRANSFERASE"/>
    <property type="match status" value="1"/>
</dbReference>
<dbReference type="Pfam" id="PF02548">
    <property type="entry name" value="Pantoate_transf"/>
    <property type="match status" value="1"/>
</dbReference>
<dbReference type="PIRSF" id="PIRSF000388">
    <property type="entry name" value="Pantoate_hydroxy_MeTrfase"/>
    <property type="match status" value="1"/>
</dbReference>
<dbReference type="SUPFAM" id="SSF51621">
    <property type="entry name" value="Phosphoenolpyruvate/pyruvate domain"/>
    <property type="match status" value="1"/>
</dbReference>
<gene>
    <name evidence="1" type="primary">panB</name>
    <name type="ordered locus">BF2163</name>
</gene>
<organism>
    <name type="scientific">Bacteroides fragilis (strain YCH46)</name>
    <dbReference type="NCBI Taxonomy" id="295405"/>
    <lineage>
        <taxon>Bacteria</taxon>
        <taxon>Pseudomonadati</taxon>
        <taxon>Bacteroidota</taxon>
        <taxon>Bacteroidia</taxon>
        <taxon>Bacteroidales</taxon>
        <taxon>Bacteroidaceae</taxon>
        <taxon>Bacteroides</taxon>
    </lineage>
</organism>
<sequence>MAGYISDDTRKVTTHRLIEMKQRGEKISMLTSYDYTMAQIVDGAGIDVILVGDSASNVMAGNVTTLPITLDQMIYHGKSVVRGVKRAMVVVDMPFGSYQGNEMEGLASAIRIMKESHADALKLEGGEEIIDTVKRILSAGIPVMGHLGLMPQSINKYGTYTVRAKDDAEAEKLIRDAHLLEEAGCFGLVLEKIPAALASRVASELTIPVIGIGAGGDVDGQVLVIQDMLGMNNGFRPRFLRRYADLYTVMTDAISHYVSDVKNCDFPNEKEQY</sequence>
<name>PANB_BACFR</name>
<comment type="function">
    <text evidence="1">Catalyzes the reversible reaction in which hydroxymethyl group from 5,10-methylenetetrahydrofolate is transferred onto alpha-ketoisovalerate to form ketopantoate.</text>
</comment>
<comment type="catalytic activity">
    <reaction evidence="1">
        <text>3-methyl-2-oxobutanoate + (6R)-5,10-methylene-5,6,7,8-tetrahydrofolate + H2O = 2-dehydropantoate + (6S)-5,6,7,8-tetrahydrofolate</text>
        <dbReference type="Rhea" id="RHEA:11824"/>
        <dbReference type="ChEBI" id="CHEBI:11561"/>
        <dbReference type="ChEBI" id="CHEBI:11851"/>
        <dbReference type="ChEBI" id="CHEBI:15377"/>
        <dbReference type="ChEBI" id="CHEBI:15636"/>
        <dbReference type="ChEBI" id="CHEBI:57453"/>
        <dbReference type="EC" id="2.1.2.11"/>
    </reaction>
</comment>
<comment type="cofactor">
    <cofactor evidence="1">
        <name>Mg(2+)</name>
        <dbReference type="ChEBI" id="CHEBI:18420"/>
    </cofactor>
    <text evidence="1">Binds 1 Mg(2+) ion per subunit.</text>
</comment>
<comment type="pathway">
    <text evidence="1">Cofactor biosynthesis; (R)-pantothenate biosynthesis; (R)-pantoate from 3-methyl-2-oxobutanoate: step 1/2.</text>
</comment>
<comment type="subunit">
    <text evidence="1">Homodecamer; pentamer of dimers.</text>
</comment>
<comment type="subcellular location">
    <subcellularLocation>
        <location evidence="1">Cytoplasm</location>
    </subcellularLocation>
</comment>
<comment type="similarity">
    <text evidence="1">Belongs to the PanB family.</text>
</comment>
<reference key="1">
    <citation type="journal article" date="2004" name="Proc. Natl. Acad. Sci. U.S.A.">
        <title>Genomic analysis of Bacteroides fragilis reveals extensive DNA inversions regulating cell surface adaptation.</title>
        <authorList>
            <person name="Kuwahara T."/>
            <person name="Yamashita A."/>
            <person name="Hirakawa H."/>
            <person name="Nakayama H."/>
            <person name="Toh H."/>
            <person name="Okada N."/>
            <person name="Kuhara S."/>
            <person name="Hattori M."/>
            <person name="Hayashi T."/>
            <person name="Ohnishi Y."/>
        </authorList>
    </citation>
    <scope>NUCLEOTIDE SEQUENCE [LARGE SCALE GENOMIC DNA]</scope>
    <source>
        <strain>YCH46</strain>
    </source>
</reference>
<evidence type="ECO:0000255" key="1">
    <source>
        <dbReference type="HAMAP-Rule" id="MF_00156"/>
    </source>
</evidence>
<feature type="chain" id="PRO_0000184812" description="3-methyl-2-oxobutanoate hydroxymethyltransferase">
    <location>
        <begin position="1"/>
        <end position="273"/>
    </location>
</feature>
<feature type="active site" description="Proton acceptor" evidence="1">
    <location>
        <position position="191"/>
    </location>
</feature>
<feature type="binding site" evidence="1">
    <location>
        <begin position="53"/>
        <end position="54"/>
    </location>
    <ligand>
        <name>3-methyl-2-oxobutanoate</name>
        <dbReference type="ChEBI" id="CHEBI:11851"/>
    </ligand>
</feature>
<feature type="binding site" evidence="1">
    <location>
        <position position="53"/>
    </location>
    <ligand>
        <name>Mg(2+)</name>
        <dbReference type="ChEBI" id="CHEBI:18420"/>
    </ligand>
</feature>
<feature type="binding site" evidence="1">
    <location>
        <position position="92"/>
    </location>
    <ligand>
        <name>3-methyl-2-oxobutanoate</name>
        <dbReference type="ChEBI" id="CHEBI:11851"/>
    </ligand>
</feature>
<feature type="binding site" evidence="1">
    <location>
        <position position="92"/>
    </location>
    <ligand>
        <name>Mg(2+)</name>
        <dbReference type="ChEBI" id="CHEBI:18420"/>
    </ligand>
</feature>
<feature type="binding site" evidence="1">
    <location>
        <position position="122"/>
    </location>
    <ligand>
        <name>3-methyl-2-oxobutanoate</name>
        <dbReference type="ChEBI" id="CHEBI:11851"/>
    </ligand>
</feature>
<feature type="binding site" evidence="1">
    <location>
        <position position="124"/>
    </location>
    <ligand>
        <name>Mg(2+)</name>
        <dbReference type="ChEBI" id="CHEBI:18420"/>
    </ligand>
</feature>
<keyword id="KW-0963">Cytoplasm</keyword>
<keyword id="KW-0460">Magnesium</keyword>
<keyword id="KW-0479">Metal-binding</keyword>
<keyword id="KW-0566">Pantothenate biosynthesis</keyword>
<keyword id="KW-0808">Transferase</keyword>